<name>DXS_SALPA</name>
<evidence type="ECO:0000255" key="1">
    <source>
        <dbReference type="HAMAP-Rule" id="MF_00315"/>
    </source>
</evidence>
<gene>
    <name evidence="1" type="primary">dxs</name>
    <name type="ordered locus">SPA2301</name>
</gene>
<keyword id="KW-0414">Isoprene biosynthesis</keyword>
<keyword id="KW-0460">Magnesium</keyword>
<keyword id="KW-0479">Metal-binding</keyword>
<keyword id="KW-0784">Thiamine biosynthesis</keyword>
<keyword id="KW-0786">Thiamine pyrophosphate</keyword>
<keyword id="KW-0808">Transferase</keyword>
<comment type="function">
    <text evidence="1">Catalyzes the acyloin condensation reaction between C atoms 2 and 3 of pyruvate and glyceraldehyde 3-phosphate to yield 1-deoxy-D-xylulose-5-phosphate (DXP).</text>
</comment>
<comment type="catalytic activity">
    <reaction evidence="1">
        <text>D-glyceraldehyde 3-phosphate + pyruvate + H(+) = 1-deoxy-D-xylulose 5-phosphate + CO2</text>
        <dbReference type="Rhea" id="RHEA:12605"/>
        <dbReference type="ChEBI" id="CHEBI:15361"/>
        <dbReference type="ChEBI" id="CHEBI:15378"/>
        <dbReference type="ChEBI" id="CHEBI:16526"/>
        <dbReference type="ChEBI" id="CHEBI:57792"/>
        <dbReference type="ChEBI" id="CHEBI:59776"/>
        <dbReference type="EC" id="2.2.1.7"/>
    </reaction>
</comment>
<comment type="cofactor">
    <cofactor evidence="1">
        <name>Mg(2+)</name>
        <dbReference type="ChEBI" id="CHEBI:18420"/>
    </cofactor>
    <text evidence="1">Binds 1 Mg(2+) ion per subunit.</text>
</comment>
<comment type="cofactor">
    <cofactor evidence="1">
        <name>thiamine diphosphate</name>
        <dbReference type="ChEBI" id="CHEBI:58937"/>
    </cofactor>
    <text evidence="1">Binds 1 thiamine pyrophosphate per subunit.</text>
</comment>
<comment type="pathway">
    <text evidence="1">Metabolic intermediate biosynthesis; 1-deoxy-D-xylulose 5-phosphate biosynthesis; 1-deoxy-D-xylulose 5-phosphate from D-glyceraldehyde 3-phosphate and pyruvate: step 1/1.</text>
</comment>
<comment type="subunit">
    <text evidence="1">Homodimer.</text>
</comment>
<comment type="similarity">
    <text evidence="1">Belongs to the transketolase family. DXPS subfamily.</text>
</comment>
<dbReference type="EC" id="2.2.1.7" evidence="1"/>
<dbReference type="EMBL" id="CP000026">
    <property type="protein sequence ID" value="AAV78186.1"/>
    <property type="molecule type" value="Genomic_DNA"/>
</dbReference>
<dbReference type="RefSeq" id="WP_000006771.1">
    <property type="nucleotide sequence ID" value="NC_006511.1"/>
</dbReference>
<dbReference type="SMR" id="Q5PFR6"/>
<dbReference type="KEGG" id="spt:SPA2301"/>
<dbReference type="HOGENOM" id="CLU_009227_1_4_6"/>
<dbReference type="UniPathway" id="UPA00064">
    <property type="reaction ID" value="UER00091"/>
</dbReference>
<dbReference type="Proteomes" id="UP000008185">
    <property type="component" value="Chromosome"/>
</dbReference>
<dbReference type="GO" id="GO:0005829">
    <property type="term" value="C:cytosol"/>
    <property type="evidence" value="ECO:0007669"/>
    <property type="project" value="TreeGrafter"/>
</dbReference>
<dbReference type="GO" id="GO:0008661">
    <property type="term" value="F:1-deoxy-D-xylulose-5-phosphate synthase activity"/>
    <property type="evidence" value="ECO:0007669"/>
    <property type="project" value="UniProtKB-UniRule"/>
</dbReference>
<dbReference type="GO" id="GO:0000287">
    <property type="term" value="F:magnesium ion binding"/>
    <property type="evidence" value="ECO:0007669"/>
    <property type="project" value="UniProtKB-UniRule"/>
</dbReference>
<dbReference type="GO" id="GO:0030976">
    <property type="term" value="F:thiamine pyrophosphate binding"/>
    <property type="evidence" value="ECO:0007669"/>
    <property type="project" value="UniProtKB-UniRule"/>
</dbReference>
<dbReference type="GO" id="GO:0052865">
    <property type="term" value="P:1-deoxy-D-xylulose 5-phosphate biosynthetic process"/>
    <property type="evidence" value="ECO:0007669"/>
    <property type="project" value="UniProtKB-UniPathway"/>
</dbReference>
<dbReference type="GO" id="GO:0019288">
    <property type="term" value="P:isopentenyl diphosphate biosynthetic process, methylerythritol 4-phosphate pathway"/>
    <property type="evidence" value="ECO:0007669"/>
    <property type="project" value="TreeGrafter"/>
</dbReference>
<dbReference type="GO" id="GO:0016114">
    <property type="term" value="P:terpenoid biosynthetic process"/>
    <property type="evidence" value="ECO:0007669"/>
    <property type="project" value="UniProtKB-UniRule"/>
</dbReference>
<dbReference type="GO" id="GO:0009228">
    <property type="term" value="P:thiamine biosynthetic process"/>
    <property type="evidence" value="ECO:0007669"/>
    <property type="project" value="UniProtKB-UniRule"/>
</dbReference>
<dbReference type="CDD" id="cd02007">
    <property type="entry name" value="TPP_DXS"/>
    <property type="match status" value="1"/>
</dbReference>
<dbReference type="CDD" id="cd07033">
    <property type="entry name" value="TPP_PYR_DXS_TK_like"/>
    <property type="match status" value="1"/>
</dbReference>
<dbReference type="FunFam" id="3.40.50.920:FF:000002">
    <property type="entry name" value="1-deoxy-D-xylulose-5-phosphate synthase"/>
    <property type="match status" value="1"/>
</dbReference>
<dbReference type="FunFam" id="3.40.50.970:FF:000005">
    <property type="entry name" value="1-deoxy-D-xylulose-5-phosphate synthase"/>
    <property type="match status" value="1"/>
</dbReference>
<dbReference type="Gene3D" id="3.40.50.920">
    <property type="match status" value="1"/>
</dbReference>
<dbReference type="Gene3D" id="3.40.50.970">
    <property type="match status" value="2"/>
</dbReference>
<dbReference type="HAMAP" id="MF_00315">
    <property type="entry name" value="DXP_synth"/>
    <property type="match status" value="1"/>
</dbReference>
<dbReference type="InterPro" id="IPR005477">
    <property type="entry name" value="Dxylulose-5-P_synthase"/>
</dbReference>
<dbReference type="InterPro" id="IPR029061">
    <property type="entry name" value="THDP-binding"/>
</dbReference>
<dbReference type="InterPro" id="IPR009014">
    <property type="entry name" value="Transketo_C/PFOR_II"/>
</dbReference>
<dbReference type="InterPro" id="IPR005475">
    <property type="entry name" value="Transketolase-like_Pyr-bd"/>
</dbReference>
<dbReference type="InterPro" id="IPR020826">
    <property type="entry name" value="Transketolase_BS"/>
</dbReference>
<dbReference type="InterPro" id="IPR033248">
    <property type="entry name" value="Transketolase_C"/>
</dbReference>
<dbReference type="InterPro" id="IPR049557">
    <property type="entry name" value="Transketolase_CS"/>
</dbReference>
<dbReference type="NCBIfam" id="TIGR00204">
    <property type="entry name" value="dxs"/>
    <property type="match status" value="1"/>
</dbReference>
<dbReference type="NCBIfam" id="NF003933">
    <property type="entry name" value="PRK05444.2-2"/>
    <property type="match status" value="1"/>
</dbReference>
<dbReference type="PANTHER" id="PTHR43322">
    <property type="entry name" value="1-D-DEOXYXYLULOSE 5-PHOSPHATE SYNTHASE-RELATED"/>
    <property type="match status" value="1"/>
</dbReference>
<dbReference type="PANTHER" id="PTHR43322:SF5">
    <property type="entry name" value="1-DEOXY-D-XYLULOSE-5-PHOSPHATE SYNTHASE, CHLOROPLASTIC"/>
    <property type="match status" value="1"/>
</dbReference>
<dbReference type="Pfam" id="PF13292">
    <property type="entry name" value="DXP_synthase_N"/>
    <property type="match status" value="1"/>
</dbReference>
<dbReference type="Pfam" id="PF02779">
    <property type="entry name" value="Transket_pyr"/>
    <property type="match status" value="1"/>
</dbReference>
<dbReference type="Pfam" id="PF02780">
    <property type="entry name" value="Transketolase_C"/>
    <property type="match status" value="1"/>
</dbReference>
<dbReference type="SMART" id="SM00861">
    <property type="entry name" value="Transket_pyr"/>
    <property type="match status" value="1"/>
</dbReference>
<dbReference type="SUPFAM" id="SSF52518">
    <property type="entry name" value="Thiamin diphosphate-binding fold (THDP-binding)"/>
    <property type="match status" value="2"/>
</dbReference>
<dbReference type="SUPFAM" id="SSF52922">
    <property type="entry name" value="TK C-terminal domain-like"/>
    <property type="match status" value="1"/>
</dbReference>
<dbReference type="PROSITE" id="PS00801">
    <property type="entry name" value="TRANSKETOLASE_1"/>
    <property type="match status" value="1"/>
</dbReference>
<dbReference type="PROSITE" id="PS00802">
    <property type="entry name" value="TRANSKETOLASE_2"/>
    <property type="match status" value="1"/>
</dbReference>
<reference key="1">
    <citation type="journal article" date="2004" name="Nat. Genet.">
        <title>Comparison of genome degradation in Paratyphi A and Typhi, human-restricted serovars of Salmonella enterica that cause typhoid.</title>
        <authorList>
            <person name="McClelland M."/>
            <person name="Sanderson K.E."/>
            <person name="Clifton S.W."/>
            <person name="Latreille P."/>
            <person name="Porwollik S."/>
            <person name="Sabo A."/>
            <person name="Meyer R."/>
            <person name="Bieri T."/>
            <person name="Ozersky P."/>
            <person name="McLellan M."/>
            <person name="Harkins C.R."/>
            <person name="Wang C."/>
            <person name="Nguyen C."/>
            <person name="Berghoff A."/>
            <person name="Elliott G."/>
            <person name="Kohlberg S."/>
            <person name="Strong C."/>
            <person name="Du F."/>
            <person name="Carter J."/>
            <person name="Kremizki C."/>
            <person name="Layman D."/>
            <person name="Leonard S."/>
            <person name="Sun H."/>
            <person name="Fulton L."/>
            <person name="Nash W."/>
            <person name="Miner T."/>
            <person name="Minx P."/>
            <person name="Delehaunty K."/>
            <person name="Fronick C."/>
            <person name="Magrini V."/>
            <person name="Nhan M."/>
            <person name="Warren W."/>
            <person name="Florea L."/>
            <person name="Spieth J."/>
            <person name="Wilson R.K."/>
        </authorList>
    </citation>
    <scope>NUCLEOTIDE SEQUENCE [LARGE SCALE GENOMIC DNA]</scope>
    <source>
        <strain>ATCC 9150 / SARB42</strain>
    </source>
</reference>
<proteinExistence type="inferred from homology"/>
<organism>
    <name type="scientific">Salmonella paratyphi A (strain ATCC 9150 / SARB42)</name>
    <dbReference type="NCBI Taxonomy" id="295319"/>
    <lineage>
        <taxon>Bacteria</taxon>
        <taxon>Pseudomonadati</taxon>
        <taxon>Pseudomonadota</taxon>
        <taxon>Gammaproteobacteria</taxon>
        <taxon>Enterobacterales</taxon>
        <taxon>Enterobacteriaceae</taxon>
        <taxon>Salmonella</taxon>
    </lineage>
</organism>
<accession>Q5PFR6</accession>
<feature type="chain" id="PRO_0000256482" description="1-deoxy-D-xylulose-5-phosphate synthase">
    <location>
        <begin position="1"/>
        <end position="620"/>
    </location>
</feature>
<feature type="binding site" evidence="1">
    <location>
        <position position="80"/>
    </location>
    <ligand>
        <name>thiamine diphosphate</name>
        <dbReference type="ChEBI" id="CHEBI:58937"/>
    </ligand>
</feature>
<feature type="binding site" evidence="1">
    <location>
        <begin position="121"/>
        <end position="123"/>
    </location>
    <ligand>
        <name>thiamine diphosphate</name>
        <dbReference type="ChEBI" id="CHEBI:58937"/>
    </ligand>
</feature>
<feature type="binding site" evidence="1">
    <location>
        <position position="152"/>
    </location>
    <ligand>
        <name>Mg(2+)</name>
        <dbReference type="ChEBI" id="CHEBI:18420"/>
    </ligand>
</feature>
<feature type="binding site" evidence="1">
    <location>
        <begin position="153"/>
        <end position="154"/>
    </location>
    <ligand>
        <name>thiamine diphosphate</name>
        <dbReference type="ChEBI" id="CHEBI:58937"/>
    </ligand>
</feature>
<feature type="binding site" evidence="1">
    <location>
        <position position="181"/>
    </location>
    <ligand>
        <name>Mg(2+)</name>
        <dbReference type="ChEBI" id="CHEBI:18420"/>
    </ligand>
</feature>
<feature type="binding site" evidence="1">
    <location>
        <position position="181"/>
    </location>
    <ligand>
        <name>thiamine diphosphate</name>
        <dbReference type="ChEBI" id="CHEBI:58937"/>
    </ligand>
</feature>
<feature type="binding site" evidence="1">
    <location>
        <position position="288"/>
    </location>
    <ligand>
        <name>thiamine diphosphate</name>
        <dbReference type="ChEBI" id="CHEBI:58937"/>
    </ligand>
</feature>
<feature type="binding site" evidence="1">
    <location>
        <position position="370"/>
    </location>
    <ligand>
        <name>thiamine diphosphate</name>
        <dbReference type="ChEBI" id="CHEBI:58937"/>
    </ligand>
</feature>
<sequence length="620" mass="67430">MSFDIAKYPTLALVDSTQELRLLPKESLPKLCDELRRYLLDSVSRSSGHFASGLGTVELTVALHYVYNTPFDQLIWDVGHQAYPHKILTGRRDKIGTIRQKGGLHPFPWRGESEYDVLSVGHSSTSISAGIGIAVAAEKEGKDRHTVCVIGDGAITAGMAFEAMNHAGDIRPDMLVILNDNEMSISENVGALNNHLAQLLSGKLYSSLREGGKKVFSGVPPIKELLKRTEEHIKGMVVPGTLFEELGFNYIGPVDGHDVMGLISTLKNMRDLKGPQFLHIMTKKGRGYEPAEKDPITFHAVPKFDPSSGCLPKSSGGLPGYSKIFGDWLCETAAKDSKLMAITPAMREGSGMVEFSRKFPDRYFDVAIAEQHAVTFAAGLAIGGYKPVVAIYSTFLQRAYDQVIHDVAIQKLPVMFAIDRAGIVGADGQTHQGAFDLSYLRCIPDMVIMTPSDENECRQMLFTGYHYNDGPTAVRYPRGNAQGVALTPLEKLPIGKGLVKRHGEKLAILNFGTLMPEAAKVAEALNATLVDMRFVKPLDDTLILEMAAQHDALVTLEENAIMGGAGSGVNEVLMAHRKPVPVLNIGLPDLFIPQGTQEEARAELGLDAAGIEAKIKAWQA</sequence>
<protein>
    <recommendedName>
        <fullName evidence="1">1-deoxy-D-xylulose-5-phosphate synthase</fullName>
        <ecNumber evidence="1">2.2.1.7</ecNumber>
    </recommendedName>
    <alternativeName>
        <fullName evidence="1">1-deoxyxylulose-5-phosphate synthase</fullName>
        <shortName evidence="1">DXP synthase</shortName>
        <shortName evidence="1">DXPS</shortName>
    </alternativeName>
</protein>